<sequence length="1436" mass="164992">MDQDVMDFFDFSKEFKREVAPQGYISSDPKMMATDSIDSKVPKREVIGTEYVTEIVAKEKGLLNRTLRDECPQSKRKHTLDDLDTDDEEEETEIRRDDEYYKKYRFNLNRDKNLPIYAKREEILAAINANPVVILKGETGCGKTTQVPQYILDEGYKSGKYCNIVVTQPRRIAAISIANRVCQEREWQQDTVCSYQVGLHRPTSLEDTRLLYCTTGVLLNNLIRNKTLTHYTHIVLDEVHERDQDMDFLLIVVRRLLATNSRHVKIILMSATIDARELSDYFTTTNSIPPVISASHGRKHSIEKFYRDQMGSIKWKEEEDDQLVPQINDHGYRAAVKIIMVIDNMEREGAIHSRMSYDEALRYGAVLIFLPGIYEIDTMAENITLMLENDRNVKVFIVRCFSLMTPENQRDVFHPPPPGFRKIILTTNIAESSITVPDVSYVIDFCLTKVLVTDTATNFSSLRLTWASKANCRQRAGRVGRLRSGRVYRMVNKSFYQREMSEFGIPEMLRLPLQNSVLRAKELEMGSPVEILALALSPPNLSDIQNTILLLKEVGALFLTVDGVYNAMDGDVTYWGTIMSRLPLDPRLSRLIILGYVFNLLEEAIIMAAGLSMRGLYVHEGSSSRSTRAQFDSFWMHYIFADGSGSDLVAIWRVYLTYLNMVEIGHEQESAIRWANRFHVSLRSLKEMHLLVQELRVRCTNLGLIPFSVNPSQIMDDREKSFILKVIIAGAFYPNYFTRSKEMWNEHDRHIYQTISGHDPCRTVYFTNFGPSCMGELYTRRIKDFFHDARIPPENMDVTFQPGSEKVFVTFKQDDCVADSSKLVSVPGRVQSEVYKAVRMRLSCMQRIIRIMRPKQFMNYVQERGIGDVIEGRWIPPTKPLNVELLALPSVFSKTITGLITGIINCGKFYFQPLSLAECIRNMSEIFNAPQQLRKYVVDACDISKGMMVLAKRDSNFQRATVIRPENQSNRQPMFYVRFIDYGDCALLPMQQLRFMSEELIQQYGDLPPRVFECRLALVQPSSMVHGNYSWPTAANDLLQFVAKCGRIDIEVYSLFNNVAAVLIHMRNGTINDKLVAQKLCRRSDEDYMSRKDHDFRLRSQESGRYLSSAERQQINEEYLRSCQLPQDFDLPPPPQDLCGTNVRLKGPYSPLECSMQSIIRVGSSKRVNIDSASVNAVLLDTDPQDHHDHLIVAHATVESPNGQTLTARGTTLMPNVQGYGALMVMLFCPTMQLKCNEEGTSYVSILAGLGCDPVTGEPYYAEHDVLINLDVNILEDDLVLINQIRYYIDSVFFNFKEENYPAVSVNERESIYTQLRSLIKRLLSKDRSYIGKNMSNSDFVWETNPELPMPNEPFGKRAIFPMHSLTELKEDDMGRLMNLRENCSMLHKWRNFEGTLPHMTCKLCNQLLESVPQLRLHLLTILHRDREKQIDFCNQ</sequence>
<gene>
    <name type="primary">spn-E</name>
    <name type="synonym">hls</name>
    <name type="ORF">GE24344</name>
</gene>
<organism>
    <name type="scientific">Drosophila yakuba</name>
    <name type="common">Fruit fly</name>
    <dbReference type="NCBI Taxonomy" id="7245"/>
    <lineage>
        <taxon>Eukaryota</taxon>
        <taxon>Metazoa</taxon>
        <taxon>Ecdysozoa</taxon>
        <taxon>Arthropoda</taxon>
        <taxon>Hexapoda</taxon>
        <taxon>Insecta</taxon>
        <taxon>Pterygota</taxon>
        <taxon>Neoptera</taxon>
        <taxon>Endopterygota</taxon>
        <taxon>Diptera</taxon>
        <taxon>Brachycera</taxon>
        <taxon>Muscomorpha</taxon>
        <taxon>Ephydroidea</taxon>
        <taxon>Drosophilidae</taxon>
        <taxon>Drosophila</taxon>
        <taxon>Sophophora</taxon>
    </lineage>
</organism>
<keyword id="KW-0067">ATP-binding</keyword>
<keyword id="KW-0963">Cytoplasm</keyword>
<keyword id="KW-0217">Developmental protein</keyword>
<keyword id="KW-0221">Differentiation</keyword>
<keyword id="KW-0347">Helicase</keyword>
<keyword id="KW-0378">Hydrolase</keyword>
<keyword id="KW-0469">Meiosis</keyword>
<keyword id="KW-0547">Nucleotide-binding</keyword>
<keyword id="KW-0896">Oogenesis</keyword>
<keyword id="KW-0943">RNA-mediated gene silencing</keyword>
<keyword id="KW-0744">Spermatogenesis</keyword>
<dbReference type="EC" id="3.6.4.13"/>
<dbReference type="EMBL" id="CM000160">
    <property type="protein sequence ID" value="EDW97399.1"/>
    <property type="molecule type" value="Genomic_DNA"/>
</dbReference>
<dbReference type="SMR" id="B4PRJ9"/>
<dbReference type="EnsemblMetazoa" id="FBtr0270862">
    <property type="protein sequence ID" value="FBpp0269354"/>
    <property type="gene ID" value="FBgn0241465"/>
</dbReference>
<dbReference type="EnsemblMetazoa" id="XM_002097651.4">
    <property type="protein sequence ID" value="XP_002097687.1"/>
    <property type="gene ID" value="LOC6537126"/>
</dbReference>
<dbReference type="GeneID" id="6537126"/>
<dbReference type="KEGG" id="dya:Dyak_GE24344"/>
<dbReference type="eggNOG" id="KOG0920">
    <property type="taxonomic scope" value="Eukaryota"/>
</dbReference>
<dbReference type="HOGENOM" id="CLU_002601_1_0_1"/>
<dbReference type="OMA" id="ETRLTYC"/>
<dbReference type="OrthoDB" id="66977at2759"/>
<dbReference type="PhylomeDB" id="B4PRJ9"/>
<dbReference type="Proteomes" id="UP000002282">
    <property type="component" value="Chromosome 3R"/>
</dbReference>
<dbReference type="GO" id="GO:0005634">
    <property type="term" value="C:nucleus"/>
    <property type="evidence" value="ECO:0007669"/>
    <property type="project" value="EnsemblMetazoa"/>
</dbReference>
<dbReference type="GO" id="GO:0043186">
    <property type="term" value="C:P granule"/>
    <property type="evidence" value="ECO:0007669"/>
    <property type="project" value="EnsemblMetazoa"/>
</dbReference>
<dbReference type="GO" id="GO:0005524">
    <property type="term" value="F:ATP binding"/>
    <property type="evidence" value="ECO:0007669"/>
    <property type="project" value="UniProtKB-KW"/>
</dbReference>
<dbReference type="GO" id="GO:0016887">
    <property type="term" value="F:ATP hydrolysis activity"/>
    <property type="evidence" value="ECO:0007669"/>
    <property type="project" value="RHEA"/>
</dbReference>
<dbReference type="GO" id="GO:0003723">
    <property type="term" value="F:RNA binding"/>
    <property type="evidence" value="ECO:0007669"/>
    <property type="project" value="TreeGrafter"/>
</dbReference>
<dbReference type="GO" id="GO:0003724">
    <property type="term" value="F:RNA helicase activity"/>
    <property type="evidence" value="ECO:0007669"/>
    <property type="project" value="UniProtKB-EC"/>
</dbReference>
<dbReference type="GO" id="GO:0046843">
    <property type="term" value="P:dorsal appendage formation"/>
    <property type="evidence" value="ECO:0007669"/>
    <property type="project" value="EnsemblMetazoa"/>
</dbReference>
<dbReference type="GO" id="GO:0007294">
    <property type="term" value="P:germarium-derived oocyte fate determination"/>
    <property type="evidence" value="ECO:0007669"/>
    <property type="project" value="EnsemblMetazoa"/>
</dbReference>
<dbReference type="GO" id="GO:0098795">
    <property type="term" value="P:global gene silencing by mRNA cleavage"/>
    <property type="evidence" value="ECO:0007669"/>
    <property type="project" value="EnsemblMetazoa"/>
</dbReference>
<dbReference type="GO" id="GO:0031507">
    <property type="term" value="P:heterochromatin formation"/>
    <property type="evidence" value="ECO:0007669"/>
    <property type="project" value="EnsemblMetazoa"/>
</dbReference>
<dbReference type="GO" id="GO:0008298">
    <property type="term" value="P:intracellular mRNA localization"/>
    <property type="evidence" value="ECO:0007669"/>
    <property type="project" value="EnsemblMetazoa"/>
</dbReference>
<dbReference type="GO" id="GO:0007076">
    <property type="term" value="P:mitotic chromosome condensation"/>
    <property type="evidence" value="ECO:0007669"/>
    <property type="project" value="EnsemblMetazoa"/>
</dbReference>
<dbReference type="GO" id="GO:0030717">
    <property type="term" value="P:oocyte karyosome formation"/>
    <property type="evidence" value="ECO:0007669"/>
    <property type="project" value="EnsemblMetazoa"/>
</dbReference>
<dbReference type="GO" id="GO:0030720">
    <property type="term" value="P:oocyte localization involved in germarium-derived egg chamber formation"/>
    <property type="evidence" value="ECO:0007669"/>
    <property type="project" value="EnsemblMetazoa"/>
</dbReference>
<dbReference type="GO" id="GO:0001556">
    <property type="term" value="P:oocyte maturation"/>
    <property type="evidence" value="ECO:0007669"/>
    <property type="project" value="EnsemblMetazoa"/>
</dbReference>
<dbReference type="GO" id="GO:0009949">
    <property type="term" value="P:polarity specification of anterior/posterior axis"/>
    <property type="evidence" value="ECO:0007669"/>
    <property type="project" value="EnsemblMetazoa"/>
</dbReference>
<dbReference type="GO" id="GO:0009951">
    <property type="term" value="P:polarity specification of dorsal/ventral axis"/>
    <property type="evidence" value="ECO:0007669"/>
    <property type="project" value="EnsemblMetazoa"/>
</dbReference>
<dbReference type="GO" id="GO:0007317">
    <property type="term" value="P:regulation of pole plasm oskar mRNA localization"/>
    <property type="evidence" value="ECO:0007669"/>
    <property type="project" value="EnsemblMetazoa"/>
</dbReference>
<dbReference type="GO" id="GO:0140965">
    <property type="term" value="P:secondary piRNA processing"/>
    <property type="evidence" value="ECO:0007669"/>
    <property type="project" value="EnsemblMetazoa"/>
</dbReference>
<dbReference type="GO" id="GO:0007283">
    <property type="term" value="P:spermatogenesis"/>
    <property type="evidence" value="ECO:0007669"/>
    <property type="project" value="UniProtKB-KW"/>
</dbReference>
<dbReference type="GO" id="GO:0141009">
    <property type="term" value="P:transposable element silencing by piRNA-mediated mRNA destabilization"/>
    <property type="evidence" value="ECO:0007669"/>
    <property type="project" value="EnsemblMetazoa"/>
</dbReference>
<dbReference type="CDD" id="cd17988">
    <property type="entry name" value="DEXHc_TDRD9"/>
    <property type="match status" value="1"/>
</dbReference>
<dbReference type="CDD" id="cd18791">
    <property type="entry name" value="SF2_C_RHA"/>
    <property type="match status" value="1"/>
</dbReference>
<dbReference type="FunFam" id="3.40.50.300:FF:001676">
    <property type="entry name" value="DExH-box ATP-dependent RNA helicase DExH7 chloroplastic"/>
    <property type="match status" value="1"/>
</dbReference>
<dbReference type="Gene3D" id="1.20.120.1080">
    <property type="match status" value="1"/>
</dbReference>
<dbReference type="Gene3D" id="2.30.30.140">
    <property type="match status" value="1"/>
</dbReference>
<dbReference type="Gene3D" id="2.40.50.90">
    <property type="match status" value="1"/>
</dbReference>
<dbReference type="Gene3D" id="3.40.50.300">
    <property type="entry name" value="P-loop containing nucleotide triphosphate hydrolases"/>
    <property type="match status" value="2"/>
</dbReference>
<dbReference type="InterPro" id="IPR011545">
    <property type="entry name" value="DEAD/DEAH_box_helicase_dom"/>
</dbReference>
<dbReference type="InterPro" id="IPR007502">
    <property type="entry name" value="Helicase-assoc_dom"/>
</dbReference>
<dbReference type="InterPro" id="IPR014001">
    <property type="entry name" value="Helicase_ATP-bd"/>
</dbReference>
<dbReference type="InterPro" id="IPR001650">
    <property type="entry name" value="Helicase_C-like"/>
</dbReference>
<dbReference type="InterPro" id="IPR027417">
    <property type="entry name" value="P-loop_NTPase"/>
</dbReference>
<dbReference type="InterPro" id="IPR035437">
    <property type="entry name" value="SNase_OB-fold_sf"/>
</dbReference>
<dbReference type="InterPro" id="IPR002999">
    <property type="entry name" value="Tudor"/>
</dbReference>
<dbReference type="InterPro" id="IPR013087">
    <property type="entry name" value="Znf_C2H2_type"/>
</dbReference>
<dbReference type="PANTHER" id="PTHR18934">
    <property type="entry name" value="ATP-DEPENDENT RNA HELICASE"/>
    <property type="match status" value="1"/>
</dbReference>
<dbReference type="PANTHER" id="PTHR18934:SF113">
    <property type="entry name" value="ATP-DEPENDENT RNA HELICASE TDRD9"/>
    <property type="match status" value="1"/>
</dbReference>
<dbReference type="Pfam" id="PF00270">
    <property type="entry name" value="DEAD"/>
    <property type="match status" value="1"/>
</dbReference>
<dbReference type="Pfam" id="PF21010">
    <property type="entry name" value="HA2_C"/>
    <property type="match status" value="1"/>
</dbReference>
<dbReference type="Pfam" id="PF00271">
    <property type="entry name" value="Helicase_C"/>
    <property type="match status" value="1"/>
</dbReference>
<dbReference type="Pfam" id="PF00567">
    <property type="entry name" value="TUDOR"/>
    <property type="match status" value="1"/>
</dbReference>
<dbReference type="SMART" id="SM00487">
    <property type="entry name" value="DEXDc"/>
    <property type="match status" value="1"/>
</dbReference>
<dbReference type="SMART" id="SM00847">
    <property type="entry name" value="HA2"/>
    <property type="match status" value="1"/>
</dbReference>
<dbReference type="SMART" id="SM00490">
    <property type="entry name" value="HELICc"/>
    <property type="match status" value="1"/>
</dbReference>
<dbReference type="SMART" id="SM00333">
    <property type="entry name" value="TUDOR"/>
    <property type="match status" value="1"/>
</dbReference>
<dbReference type="SUPFAM" id="SSF52540">
    <property type="entry name" value="P-loop containing nucleoside triphosphate hydrolases"/>
    <property type="match status" value="1"/>
</dbReference>
<dbReference type="SUPFAM" id="SSF63748">
    <property type="entry name" value="Tudor/PWWP/MBT"/>
    <property type="match status" value="1"/>
</dbReference>
<dbReference type="PROSITE" id="PS51192">
    <property type="entry name" value="HELICASE_ATP_BIND_1"/>
    <property type="match status" value="1"/>
</dbReference>
<dbReference type="PROSITE" id="PS51194">
    <property type="entry name" value="HELICASE_CTER"/>
    <property type="match status" value="1"/>
</dbReference>
<dbReference type="PROSITE" id="PS50304">
    <property type="entry name" value="TUDOR"/>
    <property type="match status" value="1"/>
</dbReference>
<proteinExistence type="inferred from homology"/>
<reference key="1">
    <citation type="journal article" date="2007" name="Nature">
        <title>Evolution of genes and genomes on the Drosophila phylogeny.</title>
        <authorList>
            <consortium name="Drosophila 12 genomes consortium"/>
        </authorList>
    </citation>
    <scope>NUCLEOTIDE SEQUENCE [LARGE SCALE GENOMIC DNA]</scope>
    <source>
        <strain>Tai18E2 / Tucson 14021-0261.01</strain>
    </source>
</reference>
<protein>
    <recommendedName>
        <fullName>Probable ATP-dependent RNA helicase spindle-E</fullName>
        <ecNumber>3.6.4.13</ecNumber>
    </recommendedName>
    <alternativeName>
        <fullName>Homeless</fullName>
    </alternativeName>
</protein>
<accession>B4PRJ9</accession>
<comment type="function">
    <text evidence="1">Probable ATP-binding RNA helicase which plays a central role during spermatogenesis and oogenesis by repressing transposable elements and preventing their mobilization, which is essential for the germline integrity. Acts via the piRNA metabolic process, which mediates the repression of transposable elements during meiosis by forming complexes composed of piRNAs and Piwi and govern the methylation and subsequent repression of transposons. Involved in the repression of LTR retrotransposon copia. Also involved in telomere regulation by repressing specialized telomeric retroelements HeT-A, TAHRE, and TART; Drosophila telomeres being maintained by transposition of specialized telomeric retroelements. Involved in telomeric trans-silencing, a repression mechanism by which a transposon or a transgene inserted in subtelomeric heterochromatin has the capacity to repress in trans in the female germline, a homologous transposon, or transgene located in euchromatin. Involved in the repression of testis-expressed Stellate genes by the homologous Su(Ste) repeats. Required for anteroposterior and dorsoventral axis formation during oogenesis (By similarity).</text>
</comment>
<comment type="catalytic activity">
    <reaction>
        <text>ATP + H2O = ADP + phosphate + H(+)</text>
        <dbReference type="Rhea" id="RHEA:13065"/>
        <dbReference type="ChEBI" id="CHEBI:15377"/>
        <dbReference type="ChEBI" id="CHEBI:15378"/>
        <dbReference type="ChEBI" id="CHEBI:30616"/>
        <dbReference type="ChEBI" id="CHEBI:43474"/>
        <dbReference type="ChEBI" id="CHEBI:456216"/>
        <dbReference type="EC" id="3.6.4.13"/>
    </reaction>
</comment>
<comment type="subcellular location">
    <subcellularLocation>
        <location evidence="1">Cytoplasm</location>
    </subcellularLocation>
    <text evidence="1">Component of the nuage, also named P granule, a germ-cell-specific organelle required to repress transposon during meiosis.</text>
</comment>
<comment type="similarity">
    <text evidence="5">Belongs to the DEAD box helicase family. DEAH subfamily.</text>
</comment>
<name>SPNE_DROYA</name>
<feature type="chain" id="PRO_0000391923" description="Probable ATP-dependent RNA helicase spindle-E">
    <location>
        <begin position="1"/>
        <end position="1436"/>
    </location>
</feature>
<feature type="domain" description="Helicase ATP-binding" evidence="3">
    <location>
        <begin position="124"/>
        <end position="291"/>
    </location>
</feature>
<feature type="domain" description="Helicase C-terminal" evidence="4">
    <location>
        <begin position="337"/>
        <end position="524"/>
    </location>
</feature>
<feature type="domain" description="Tudor" evidence="2">
    <location>
        <begin position="940"/>
        <end position="1003"/>
    </location>
</feature>
<feature type="short sequence motif" description="DEAH box">
    <location>
        <begin position="237"/>
        <end position="240"/>
    </location>
</feature>
<feature type="binding site" evidence="3">
    <location>
        <begin position="137"/>
        <end position="144"/>
    </location>
    <ligand>
        <name>ATP</name>
        <dbReference type="ChEBI" id="CHEBI:30616"/>
    </ligand>
</feature>
<evidence type="ECO:0000250" key="1"/>
<evidence type="ECO:0000255" key="2">
    <source>
        <dbReference type="PROSITE-ProRule" id="PRU00211"/>
    </source>
</evidence>
<evidence type="ECO:0000255" key="3">
    <source>
        <dbReference type="PROSITE-ProRule" id="PRU00541"/>
    </source>
</evidence>
<evidence type="ECO:0000255" key="4">
    <source>
        <dbReference type="PROSITE-ProRule" id="PRU00542"/>
    </source>
</evidence>
<evidence type="ECO:0000305" key="5"/>